<comment type="function">
    <text evidence="1">Involved in transcription antitermination. Required for transcription of ribosomal RNA (rRNA) genes. Binds specifically to the boxA antiterminator sequence of the ribosomal RNA (rrn) operons.</text>
</comment>
<comment type="similarity">
    <text evidence="1">Belongs to the NusB family.</text>
</comment>
<sequence length="166" mass="18832">MSQTPREATPAQQSRRAARELAVQGLYQWQMTGKSITAVESEFRAQIADEDLEDHENWHKVMGIADLALFHELLHNVAADREAIDKTIAPLLDRRLEDLDRIELAILRLGAYELKYRLEVPYRAVINEGIELAKAFGATDGHKYVNGILDKLASRLRSAEVAARRR</sequence>
<keyword id="KW-1185">Reference proteome</keyword>
<keyword id="KW-0694">RNA-binding</keyword>
<keyword id="KW-0804">Transcription</keyword>
<keyword id="KW-0889">Transcription antitermination</keyword>
<keyword id="KW-0805">Transcription regulation</keyword>
<evidence type="ECO:0000255" key="1">
    <source>
        <dbReference type="HAMAP-Rule" id="MF_00073"/>
    </source>
</evidence>
<organism>
    <name type="scientific">Chromohalobacter salexigens (strain ATCC BAA-138 / DSM 3043 / CIP 106854 / NCIMB 13768 / 1H11)</name>
    <dbReference type="NCBI Taxonomy" id="290398"/>
    <lineage>
        <taxon>Bacteria</taxon>
        <taxon>Pseudomonadati</taxon>
        <taxon>Pseudomonadota</taxon>
        <taxon>Gammaproteobacteria</taxon>
        <taxon>Oceanospirillales</taxon>
        <taxon>Halomonadaceae</taxon>
        <taxon>Chromohalobacter</taxon>
    </lineage>
</organism>
<gene>
    <name evidence="1" type="primary">nusB</name>
    <name type="ordered locus">Csal_2582</name>
</gene>
<feature type="chain" id="PRO_0000265504" description="Transcription antitermination protein NusB">
    <location>
        <begin position="1"/>
        <end position="166"/>
    </location>
</feature>
<name>NUSB_CHRSD</name>
<reference key="1">
    <citation type="journal article" date="2011" name="Stand. Genomic Sci.">
        <title>Complete genome sequence of the halophilic and highly halotolerant Chromohalobacter salexigens type strain (1H11(T)).</title>
        <authorList>
            <person name="Copeland A."/>
            <person name="O'Connor K."/>
            <person name="Lucas S."/>
            <person name="Lapidus A."/>
            <person name="Berry K.W."/>
            <person name="Detter J.C."/>
            <person name="Del Rio T.G."/>
            <person name="Hammon N."/>
            <person name="Dalin E."/>
            <person name="Tice H."/>
            <person name="Pitluck S."/>
            <person name="Bruce D."/>
            <person name="Goodwin L."/>
            <person name="Han C."/>
            <person name="Tapia R."/>
            <person name="Saunders E."/>
            <person name="Schmutz J."/>
            <person name="Brettin T."/>
            <person name="Larimer F."/>
            <person name="Land M."/>
            <person name="Hauser L."/>
            <person name="Vargas C."/>
            <person name="Nieto J.J."/>
            <person name="Kyrpides N.C."/>
            <person name="Ivanova N."/>
            <person name="Goker M."/>
            <person name="Klenk H.P."/>
            <person name="Csonka L.N."/>
            <person name="Woyke T."/>
        </authorList>
    </citation>
    <scope>NUCLEOTIDE SEQUENCE [LARGE SCALE GENOMIC DNA]</scope>
    <source>
        <strain>ATCC BAA-138 / DSM 3043 / CIP 106854 / NCIMB 13768 / 1H11</strain>
    </source>
</reference>
<protein>
    <recommendedName>
        <fullName evidence="1">Transcription antitermination protein NusB</fullName>
    </recommendedName>
    <alternativeName>
        <fullName evidence="1">Antitermination factor NusB</fullName>
    </alternativeName>
</protein>
<proteinExistence type="inferred from homology"/>
<accession>Q1QUC9</accession>
<dbReference type="EMBL" id="CP000285">
    <property type="protein sequence ID" value="ABE59929.1"/>
    <property type="molecule type" value="Genomic_DNA"/>
</dbReference>
<dbReference type="RefSeq" id="WP_011507875.1">
    <property type="nucleotide sequence ID" value="NC_007963.1"/>
</dbReference>
<dbReference type="SMR" id="Q1QUC9"/>
<dbReference type="STRING" id="290398.Csal_2582"/>
<dbReference type="GeneID" id="95335283"/>
<dbReference type="KEGG" id="csa:Csal_2582"/>
<dbReference type="eggNOG" id="COG0781">
    <property type="taxonomic scope" value="Bacteria"/>
</dbReference>
<dbReference type="HOGENOM" id="CLU_087843_4_1_6"/>
<dbReference type="OrthoDB" id="9789556at2"/>
<dbReference type="Proteomes" id="UP000000239">
    <property type="component" value="Chromosome"/>
</dbReference>
<dbReference type="GO" id="GO:0005829">
    <property type="term" value="C:cytosol"/>
    <property type="evidence" value="ECO:0007669"/>
    <property type="project" value="TreeGrafter"/>
</dbReference>
<dbReference type="GO" id="GO:0003723">
    <property type="term" value="F:RNA binding"/>
    <property type="evidence" value="ECO:0007669"/>
    <property type="project" value="UniProtKB-UniRule"/>
</dbReference>
<dbReference type="GO" id="GO:0006353">
    <property type="term" value="P:DNA-templated transcription termination"/>
    <property type="evidence" value="ECO:0007669"/>
    <property type="project" value="UniProtKB-UniRule"/>
</dbReference>
<dbReference type="GO" id="GO:0031564">
    <property type="term" value="P:transcription antitermination"/>
    <property type="evidence" value="ECO:0007669"/>
    <property type="project" value="UniProtKB-KW"/>
</dbReference>
<dbReference type="Gene3D" id="1.10.940.10">
    <property type="entry name" value="NusB-like"/>
    <property type="match status" value="1"/>
</dbReference>
<dbReference type="HAMAP" id="MF_00073">
    <property type="entry name" value="NusB"/>
    <property type="match status" value="1"/>
</dbReference>
<dbReference type="InterPro" id="IPR035926">
    <property type="entry name" value="NusB-like_sf"/>
</dbReference>
<dbReference type="InterPro" id="IPR011605">
    <property type="entry name" value="NusB_fam"/>
</dbReference>
<dbReference type="InterPro" id="IPR006027">
    <property type="entry name" value="NusB_RsmB_TIM44"/>
</dbReference>
<dbReference type="NCBIfam" id="TIGR01951">
    <property type="entry name" value="nusB"/>
    <property type="match status" value="1"/>
</dbReference>
<dbReference type="PANTHER" id="PTHR11078:SF3">
    <property type="entry name" value="ANTITERMINATION NUSB DOMAIN-CONTAINING PROTEIN"/>
    <property type="match status" value="1"/>
</dbReference>
<dbReference type="PANTHER" id="PTHR11078">
    <property type="entry name" value="N UTILIZATION SUBSTANCE PROTEIN B-RELATED"/>
    <property type="match status" value="1"/>
</dbReference>
<dbReference type="Pfam" id="PF01029">
    <property type="entry name" value="NusB"/>
    <property type="match status" value="1"/>
</dbReference>
<dbReference type="SUPFAM" id="SSF48013">
    <property type="entry name" value="NusB-like"/>
    <property type="match status" value="1"/>
</dbReference>